<keyword id="KW-1185">Reference proteome</keyword>
<keyword id="KW-0677">Repeat</keyword>
<keyword id="KW-0853">WD repeat</keyword>
<accession>Q55AV3</accession>
<accession>Q55AV2</accession>
<accession>Q8IHK8</accession>
<protein>
    <recommendedName>
        <fullName>BEACH domain-containing protein lvsD</fullName>
    </recommendedName>
</protein>
<gene>
    <name type="primary">lvsD</name>
    <name type="ORF">DDB_G0271502</name>
</gene>
<name>LVSD_DICDI</name>
<dbReference type="EMBL" id="AAFI02000006">
    <property type="protein sequence ID" value="EAL71615.1"/>
    <property type="status" value="ALT_SEQ"/>
    <property type="molecule type" value="Genomic_DNA"/>
</dbReference>
<dbReference type="EMBL" id="AAFI02000006">
    <property type="protein sequence ID" value="EAL71686.1"/>
    <property type="status" value="ALT_SEQ"/>
    <property type="molecule type" value="Genomic_DNA"/>
</dbReference>
<dbReference type="EMBL" id="AY159040">
    <property type="protein sequence ID" value="AAN38987.1"/>
    <property type="status" value="ALT_SEQ"/>
    <property type="molecule type" value="Genomic_DNA"/>
</dbReference>
<dbReference type="RefSeq" id="XP_645593.1">
    <property type="nucleotide sequence ID" value="XM_640501.1"/>
</dbReference>
<dbReference type="RefSeq" id="XP_645594.1">
    <property type="nucleotide sequence ID" value="XM_640502.1"/>
</dbReference>
<dbReference type="SMR" id="Q55AV3"/>
<dbReference type="FunCoup" id="Q55AV3">
    <property type="interactions" value="9"/>
</dbReference>
<dbReference type="STRING" id="44689.Q55AV3"/>
<dbReference type="GlyGen" id="Q55AV3">
    <property type="glycosylation" value="2 sites"/>
</dbReference>
<dbReference type="PaxDb" id="44689-DDB0185108"/>
<dbReference type="EnsemblProtists" id="EAL71615">
    <property type="protein sequence ID" value="EAL71615"/>
    <property type="gene ID" value="DDB_G0271502"/>
</dbReference>
<dbReference type="EnsemblProtists" id="EAL71686">
    <property type="protein sequence ID" value="EAL71686"/>
    <property type="gene ID" value="DDB_G0271644"/>
</dbReference>
<dbReference type="GeneID" id="8618048"/>
<dbReference type="KEGG" id="ddi:DDB_G0271502"/>
<dbReference type="KEGG" id="ddi:DDB_G0271644"/>
<dbReference type="dictyBase" id="DDB_G0271502">
    <property type="gene designation" value="lvsD"/>
</dbReference>
<dbReference type="VEuPathDB" id="AmoebaDB:DDB_G0271502"/>
<dbReference type="VEuPathDB" id="AmoebaDB:DDB_G0271644"/>
<dbReference type="eggNOG" id="KOG1787">
    <property type="taxonomic scope" value="Eukaryota"/>
</dbReference>
<dbReference type="InParanoid" id="Q55AV3"/>
<dbReference type="PRO" id="PR:Q55AV3"/>
<dbReference type="Proteomes" id="UP000002195">
    <property type="component" value="Chromosome 2"/>
</dbReference>
<dbReference type="GO" id="GO:0005829">
    <property type="term" value="C:cytosol"/>
    <property type="evidence" value="ECO:0000314"/>
    <property type="project" value="dictyBase"/>
</dbReference>
<dbReference type="GO" id="GO:0016020">
    <property type="term" value="C:membrane"/>
    <property type="evidence" value="ECO:0000318"/>
    <property type="project" value="GO_Central"/>
</dbReference>
<dbReference type="GO" id="GO:0019901">
    <property type="term" value="F:protein kinase binding"/>
    <property type="evidence" value="ECO:0000318"/>
    <property type="project" value="GO_Central"/>
</dbReference>
<dbReference type="GO" id="GO:0033298">
    <property type="term" value="P:contractile vacuole organization"/>
    <property type="evidence" value="ECO:0000316"/>
    <property type="project" value="dictyBase"/>
</dbReference>
<dbReference type="GO" id="GO:0008104">
    <property type="term" value="P:protein localization"/>
    <property type="evidence" value="ECO:0000318"/>
    <property type="project" value="GO_Central"/>
</dbReference>
<dbReference type="GO" id="GO:0030587">
    <property type="term" value="P:sorocarp development"/>
    <property type="evidence" value="ECO:0007001"/>
    <property type="project" value="dictyBase"/>
</dbReference>
<dbReference type="CDD" id="cd06071">
    <property type="entry name" value="Beach"/>
    <property type="match status" value="1"/>
</dbReference>
<dbReference type="FunFam" id="1.10.1540.10:FF:000001">
    <property type="entry name" value="neurobeachin isoform X1"/>
    <property type="match status" value="1"/>
</dbReference>
<dbReference type="Gene3D" id="2.60.120.200">
    <property type="match status" value="1"/>
</dbReference>
<dbReference type="Gene3D" id="1.10.1540.10">
    <property type="entry name" value="BEACH domain"/>
    <property type="match status" value="1"/>
</dbReference>
<dbReference type="Gene3D" id="2.30.29.30">
    <property type="entry name" value="Pleckstrin-homology domain (PH domain)/Phosphotyrosine-binding domain (PTB)"/>
    <property type="match status" value="1"/>
</dbReference>
<dbReference type="Gene3D" id="2.130.10.10">
    <property type="entry name" value="YVTN repeat-like/Quinoprotein amine dehydrogenase"/>
    <property type="match status" value="1"/>
</dbReference>
<dbReference type="InterPro" id="IPR000409">
    <property type="entry name" value="BEACH_dom"/>
</dbReference>
<dbReference type="InterPro" id="IPR036372">
    <property type="entry name" value="BEACH_dom_sf"/>
</dbReference>
<dbReference type="InterPro" id="IPR050865">
    <property type="entry name" value="BEACH_Domain"/>
</dbReference>
<dbReference type="InterPro" id="IPR013320">
    <property type="entry name" value="ConA-like_dom_sf"/>
</dbReference>
<dbReference type="InterPro" id="IPR046851">
    <property type="entry name" value="NBCH_WD40"/>
</dbReference>
<dbReference type="InterPro" id="IPR031570">
    <property type="entry name" value="NBEA/BDCP_DUF4704"/>
</dbReference>
<dbReference type="InterPro" id="IPR023362">
    <property type="entry name" value="PH-BEACH_dom"/>
</dbReference>
<dbReference type="InterPro" id="IPR011993">
    <property type="entry name" value="PH-like_dom_sf"/>
</dbReference>
<dbReference type="InterPro" id="IPR015943">
    <property type="entry name" value="WD40/YVTN_repeat-like_dom_sf"/>
</dbReference>
<dbReference type="InterPro" id="IPR036322">
    <property type="entry name" value="WD40_repeat_dom_sf"/>
</dbReference>
<dbReference type="InterPro" id="IPR001680">
    <property type="entry name" value="WD40_rpt"/>
</dbReference>
<dbReference type="PANTHER" id="PTHR13743:SF112">
    <property type="entry name" value="BEACH DOMAIN-CONTAINING PROTEIN"/>
    <property type="match status" value="1"/>
</dbReference>
<dbReference type="PANTHER" id="PTHR13743">
    <property type="entry name" value="BEIGE/BEACH-RELATED"/>
    <property type="match status" value="1"/>
</dbReference>
<dbReference type="Pfam" id="PF02138">
    <property type="entry name" value="Beach"/>
    <property type="match status" value="1"/>
</dbReference>
<dbReference type="Pfam" id="PF15787">
    <property type="entry name" value="DUF4704"/>
    <property type="match status" value="2"/>
</dbReference>
<dbReference type="Pfam" id="PF20426">
    <property type="entry name" value="NBCH_WD40"/>
    <property type="match status" value="1"/>
</dbReference>
<dbReference type="Pfam" id="PF14844">
    <property type="entry name" value="PH_BEACH"/>
    <property type="match status" value="1"/>
</dbReference>
<dbReference type="SMART" id="SM01026">
    <property type="entry name" value="Beach"/>
    <property type="match status" value="1"/>
</dbReference>
<dbReference type="SMART" id="SM00320">
    <property type="entry name" value="WD40"/>
    <property type="match status" value="2"/>
</dbReference>
<dbReference type="SUPFAM" id="SSF81837">
    <property type="entry name" value="BEACH domain"/>
    <property type="match status" value="1"/>
</dbReference>
<dbReference type="SUPFAM" id="SSF49899">
    <property type="entry name" value="Concanavalin A-like lectins/glucanases"/>
    <property type="match status" value="1"/>
</dbReference>
<dbReference type="SUPFAM" id="SSF50729">
    <property type="entry name" value="PH domain-like"/>
    <property type="match status" value="1"/>
</dbReference>
<dbReference type="SUPFAM" id="SSF50978">
    <property type="entry name" value="WD40 repeat-like"/>
    <property type="match status" value="1"/>
</dbReference>
<dbReference type="PROSITE" id="PS50197">
    <property type="entry name" value="BEACH"/>
    <property type="match status" value="1"/>
</dbReference>
<dbReference type="PROSITE" id="PS51783">
    <property type="entry name" value="PH_BEACH"/>
    <property type="match status" value="1"/>
</dbReference>
<dbReference type="PROSITE" id="PS50294">
    <property type="entry name" value="WD_REPEATS_REGION"/>
    <property type="match status" value="1"/>
</dbReference>
<proteinExistence type="predicted"/>
<organism>
    <name type="scientific">Dictyostelium discoideum</name>
    <name type="common">Social amoeba</name>
    <dbReference type="NCBI Taxonomy" id="44689"/>
    <lineage>
        <taxon>Eukaryota</taxon>
        <taxon>Amoebozoa</taxon>
        <taxon>Evosea</taxon>
        <taxon>Eumycetozoa</taxon>
        <taxon>Dictyostelia</taxon>
        <taxon>Dictyosteliales</taxon>
        <taxon>Dictyosteliaceae</taxon>
        <taxon>Dictyostelium</taxon>
    </lineage>
</organism>
<evidence type="ECO:0000255" key="1">
    <source>
        <dbReference type="PROSITE-ProRule" id="PRU00026"/>
    </source>
</evidence>
<evidence type="ECO:0000255" key="2">
    <source>
        <dbReference type="PROSITE-ProRule" id="PRU01119"/>
    </source>
</evidence>
<evidence type="ECO:0000256" key="3">
    <source>
        <dbReference type="SAM" id="MobiDB-lite"/>
    </source>
</evidence>
<evidence type="ECO:0000305" key="4"/>
<sequence length="2967" mass="335927">MSSPLKFPFKQQQQQQQQQRSRIGGDDIMNKLENEKYIVKQLFEQLLGYDNNSSFSNSNNLRITNQINNLFNGNYDPTEQDRFIIKNFTKIHEIILLLKDEEISSFIKIKILDQLIQILSYSSNNTINLIQSTSPINNNNNRKSKTLYTNKSLVILDELIQMLPSIDNEQISLKTLQLIEILGTEHITVKQLRKLLKLFDRNYLLTNFKPNHYFLQNGLPNLMKSLDVMTFRKAPSSVFYMNGINSGLIVDPIGKISTSGYTISTWINIESFQHESEFIRSYEPRLFSFLNDGGSAGIEGYFENSKFVIRINEKVKAIVNLNNNNNNNNNNNNNNNNNNNNNNNNNNNNNNNNNNNNNNSSSNSDFPTNKWCHLLVTQSPKKWGLYPGNTTLNIYLDGKLVHTQQIKYPSTSKNLNICSIGTVPSGSVPSNNSGFTYISSPSSPFSLSSSSSGGNNQSECCLKCQMGSFSMLSTFYDNSDVQDLFRKGSNYILKKQKNVQFTFSPKSFYGGVCHGLGNRELDNSINAFSIGDLKIFSTFSIKDSIYLIGGPQIIFPLLQAIEDQFKFITPITLSPNLLSSSSSSSSSILSIDPNNNNNNNNNNNNNIQQPQQQQLQLNEEETINTNNNIKLTSSQSTDNIVVFNGSQEDINQLSKLINYPRISSILRFITHLLINDKYNQKELIGSNGLSLLGYLISNIFSNSDSNPSHPYNFKTLEREEFDLIFDALDQLTDFSLVDKNPLLKLNIYKEIIFNFNIWVHIKKEYQIQLFNLIIFKVSQNPQYFRENIKVRYLLDCIKYFYHINENTIISTNNNNNNNNIGESSGANNNNNNNNNNTNNVGNCRLNCHLSNQDLKEIISYIFDIIKIIIKPILNEKEVPEIQEIIKFIQDSECNSTVIKESLMILLSNLFLPVNNNNNSNNNNNNNNSNSNNNNINIGGDEKFQNYDTIKGFLNSFESSGDIKSLLGLLKHNNEQVQVLVIKIIGKYMGGSEGLSMASSGNVRRSLKLKNTLTDVLYFITDQLMEFEMTELMYRGLSEIVVDEITPSIADTPNSPLLELLGSETLLADSISSVNIMGGSNNNNNNNNNNSNNNKDKIDSNNKDKDSKEKRIINIAALETICRLAIRAPLALQQKILNEILLCIKHLPQMRAGILDSENWQHWLLSLWPQPRSNTSSPPWSPPISPLLTSTKSMSPSPPPPPPLSSSSYQQQQQNIISDHRSQTKEQLSIRAYQSGIKEILTGIMKVLLFDCINKKDGWKFIEETEAWIFSILPNGVPLERRIFYECLLNLERGLKSSNHDPTTGGILLKNYVNLVSIIEDFVFSHTMNILAHRNTQSQWEDFGVVAKLLDIFDISQSIQTIRIQANVVKPTASSSLNPFSSNHSNYQSPYGSMQFSPYIMTLANNSGTIDLPSIDVTSGSAKAKSSIHTIYRLCLCIFQEAESCFYGERESYHQSKHDHTNENADDEERQFSIRVWGLPMISEDMDHIISKNSIRIQTILASERDQKEQVKHVMWIVCSLITIIRRHKTNNEDKIIINTQSIIISLLKQLLKTYGDLIDNFINPPSNILSPIINSVVGGGNNNNNSGNNNSGNNINNNNNNNNNNTNLNNNENEKTSFSVHSISSLNEKTDLINHPEFLKYFNDKLLPKITLLDKLHEIKDHYENAHLQSAFTMTRRNKVLEAINSNYQKHQNVITYKINKLLTKSISTSQKYEFQEIQRKSDFQEYIQQYNQYIIDLWNTKFKQLTQQESSPWFQMEPNHNEKTIWRLYNISNSNRVNILMKKDYDGTDHPEASLSNQKILRQQQLRMEQQQQLRLEQQQQKLQQQQQQQQQQQQSQQSLQLPPSPSISNAGSSSSVVEQLKNNPILRKVTKHTTSTDSLGNDTLVGFEIEEKDDDGNNIILDDEHESEWCLVDEKIMKPQKTPQNQHQQQQAQQQHQQQQQQHQFKRSTSLSANQTLLNTSSTSSLSSSSSPSSSFSNIQTVTNSGGGGTNIITTTTTTTTTSTLNNDRVNSNFNLFEQLNLLNPKKSTLTSSSSSSPSSNNNNGNSNNNSNNNNNNNKNIKLEFSTQGEIIKPMSVIRIKLQIFTDRLILTSNLIQEDDCIPPKYLKDREYEIKKIIGVQCRRYLLSPTALEFFFIDRKSLLVNFPRGSICAQILKLIGNLYGSNDIIFKINTNNVSFFDGTIGANNSTNNSNSNQPMTPQQVVIKYLNPTARWKRREISNFEYLMTLNTIAGRTYNDLNQYPVFPWIIGDNSSNTLNINDQSIYRDLSKPIGALNPTRLELFMERWTQCPAEIPAFMYGTHYSSSGSVMFFLMRCEPFTSHFIKLQSGHFDHADRMFDSIIDCWRNCLNSSSDVKELTPEFFYLPEFLINRNRVEFGVKQNGKALDNVSLPPWAQQSPYHFIMLNRMALESEYVSMNLHHWIDLIFGYKQRGKEAVKANNVFYHLTYEGSVDIGAMNDPILREATRVQINNFGVTPSQLFPNQPHPQRDPLPQRYSNKLDIFKRLKPLQLISLPFSPLCIFVYCPTKSDYYSGGIGSSLISGVVGNSSSANSLLGDRVLLIGEANNDLQYYRYLESTSTISTQTSTNLVSQSVQPLPSNANQPITLSSGLRSVIGKPFCQIPSNSRVLLTSGKCDYTLHIVHGEGSKLVTGSINHKSPITCIVYDEYQCGRLGVGGVLIEQKVIVTGSDDSTAIVWEYEQSQSDHHSIKPIHILRGHNFGITCIAINKANDICLTASKDGKVNVHSLKKGTFFKSIQHPNKLPIHSIILENDSSTFFIYSNSILPIVQSDYNSSATTTTTTRDDESSSSSLSSSNTTISNNNVLYRYSINGDLIQSVQNDVQPIIVKMLITKSQNGIRYLLTAGGYQIVIREMLNLEIVHVFDIRDLSGFTNSNKIVDIYLWGGDESYQKPSTSVSGDSNSNNNNNNNGNNTINNNLTLMVPLESCQLLIYSFDEFGNLKSLD</sequence>
<feature type="chain" id="PRO_0000327710" description="BEACH domain-containing protein lvsD">
    <location>
        <begin position="1"/>
        <end position="2967"/>
    </location>
</feature>
<feature type="domain" description="BEACH 1" evidence="1">
    <location>
        <begin position="229"/>
        <end position="491" status="uncertain"/>
    </location>
</feature>
<feature type="domain" description="BEACH-type PH" evidence="2">
    <location>
        <begin position="2060"/>
        <end position="2162"/>
    </location>
</feature>
<feature type="domain" description="BEACH 2" evidence="1">
    <location>
        <begin position="2202"/>
        <end position="2492"/>
    </location>
</feature>
<feature type="domain" description="BEACH 3" evidence="1">
    <location>
        <begin position="2628"/>
        <end position="2785" status="uncertain"/>
    </location>
</feature>
<feature type="repeat" description="WD 1">
    <location>
        <begin position="2658"/>
        <end position="2710"/>
    </location>
</feature>
<feature type="repeat" description="WD 2">
    <location>
        <begin position="2720"/>
        <end position="2761"/>
    </location>
</feature>
<feature type="region of interest" description="Disordered" evidence="3">
    <location>
        <begin position="1"/>
        <end position="25"/>
    </location>
</feature>
<feature type="region of interest" description="Disordered" evidence="3">
    <location>
        <begin position="322"/>
        <end position="364"/>
    </location>
</feature>
<feature type="region of interest" description="Disordered" evidence="3">
    <location>
        <begin position="588"/>
        <end position="615"/>
    </location>
</feature>
<feature type="region of interest" description="Disordered" evidence="3">
    <location>
        <begin position="917"/>
        <end position="936"/>
    </location>
</feature>
<feature type="region of interest" description="Disordered" evidence="3">
    <location>
        <begin position="1077"/>
        <end position="1105"/>
    </location>
</feature>
<feature type="region of interest" description="Disordered" evidence="3">
    <location>
        <begin position="1173"/>
        <end position="1220"/>
    </location>
</feature>
<feature type="region of interest" description="Disordered" evidence="3">
    <location>
        <begin position="1583"/>
        <end position="1613"/>
    </location>
</feature>
<feature type="region of interest" description="Disordered" evidence="3">
    <location>
        <begin position="1831"/>
        <end position="1859"/>
    </location>
</feature>
<feature type="region of interest" description="Disordered" evidence="3">
    <location>
        <begin position="1921"/>
        <end position="2009"/>
    </location>
</feature>
<feature type="region of interest" description="Disordered" evidence="3">
    <location>
        <begin position="2029"/>
        <end position="2062"/>
    </location>
</feature>
<feature type="region of interest" description="Disordered" evidence="3">
    <location>
        <begin position="2798"/>
        <end position="2820"/>
    </location>
</feature>
<feature type="region of interest" description="Disordered" evidence="3">
    <location>
        <begin position="2915"/>
        <end position="2934"/>
    </location>
</feature>
<feature type="compositionally biased region" description="Low complexity" evidence="3">
    <location>
        <begin position="1079"/>
        <end position="1092"/>
    </location>
</feature>
<feature type="compositionally biased region" description="Basic and acidic residues" evidence="3">
    <location>
        <begin position="1093"/>
        <end position="1105"/>
    </location>
</feature>
<feature type="compositionally biased region" description="Low complexity" evidence="3">
    <location>
        <begin position="1185"/>
        <end position="1194"/>
    </location>
</feature>
<feature type="compositionally biased region" description="Low complexity" evidence="3">
    <location>
        <begin position="1583"/>
        <end position="1611"/>
    </location>
</feature>
<feature type="compositionally biased region" description="Low complexity" evidence="3">
    <location>
        <begin position="1831"/>
        <end position="1857"/>
    </location>
</feature>
<feature type="compositionally biased region" description="Low complexity" evidence="3">
    <location>
        <begin position="1926"/>
        <end position="1980"/>
    </location>
</feature>
<feature type="compositionally biased region" description="Low complexity" evidence="3">
    <location>
        <begin position="1993"/>
        <end position="2006"/>
    </location>
</feature>
<feature type="compositionally biased region" description="Low complexity" evidence="3">
    <location>
        <begin position="2034"/>
        <end position="2062"/>
    </location>
</feature>
<feature type="compositionally biased region" description="Low complexity" evidence="3">
    <location>
        <begin position="2811"/>
        <end position="2820"/>
    </location>
</feature>
<feature type="compositionally biased region" description="Low complexity" evidence="3">
    <location>
        <begin position="2924"/>
        <end position="2934"/>
    </location>
</feature>
<feature type="sequence conflict" description="In Ref. 3; AAN38987." evidence="4" ref="3">
    <original>Y</original>
    <variation>D</variation>
    <location>
        <position position="395"/>
    </location>
</feature>
<feature type="sequence conflict" description="In Ref. 3; AAN38987." evidence="4" ref="3">
    <location>
        <begin position="550"/>
        <end position="647"/>
    </location>
</feature>
<feature type="sequence conflict" description="In Ref. 3; AAN38987." evidence="4" ref="3">
    <original>E</original>
    <variation>K</variation>
    <location>
        <position position="764"/>
    </location>
</feature>
<feature type="sequence conflict" description="In Ref. 3; AAN38987." evidence="4" ref="3">
    <original>R</original>
    <variation>I</variation>
    <location>
        <position position="785"/>
    </location>
</feature>
<reference key="1">
    <citation type="journal article" date="2002" name="Nature">
        <title>Sequence and analysis of chromosome 2 of Dictyostelium discoideum.</title>
        <authorList>
            <person name="Gloeckner G."/>
            <person name="Eichinger L."/>
            <person name="Szafranski K."/>
            <person name="Pachebat J.A."/>
            <person name="Bankier A.T."/>
            <person name="Dear P.H."/>
            <person name="Lehmann R."/>
            <person name="Baumgart C."/>
            <person name="Parra G."/>
            <person name="Abril J.F."/>
            <person name="Guigo R."/>
            <person name="Kumpf K."/>
            <person name="Tunggal B."/>
            <person name="Cox E.C."/>
            <person name="Quail M.A."/>
            <person name="Platzer M."/>
            <person name="Rosenthal A."/>
            <person name="Noegel A.A."/>
        </authorList>
    </citation>
    <scope>NUCLEOTIDE SEQUENCE [LARGE SCALE GENOMIC DNA]</scope>
    <source>
        <strain>AX4</strain>
    </source>
</reference>
<reference key="2">
    <citation type="journal article" date="2005" name="Nature">
        <title>The genome of the social amoeba Dictyostelium discoideum.</title>
        <authorList>
            <person name="Eichinger L."/>
            <person name="Pachebat J.A."/>
            <person name="Gloeckner G."/>
            <person name="Rajandream M.A."/>
            <person name="Sucgang R."/>
            <person name="Berriman M."/>
            <person name="Song J."/>
            <person name="Olsen R."/>
            <person name="Szafranski K."/>
            <person name="Xu Q."/>
            <person name="Tunggal B."/>
            <person name="Kummerfeld S."/>
            <person name="Madera M."/>
            <person name="Konfortov B.A."/>
            <person name="Rivero F."/>
            <person name="Bankier A.T."/>
            <person name="Lehmann R."/>
            <person name="Hamlin N."/>
            <person name="Davies R."/>
            <person name="Gaudet P."/>
            <person name="Fey P."/>
            <person name="Pilcher K."/>
            <person name="Chen G."/>
            <person name="Saunders D."/>
            <person name="Sodergren E.J."/>
            <person name="Davis P."/>
            <person name="Kerhornou A."/>
            <person name="Nie X."/>
            <person name="Hall N."/>
            <person name="Anjard C."/>
            <person name="Hemphill L."/>
            <person name="Bason N."/>
            <person name="Farbrother P."/>
            <person name="Desany B."/>
            <person name="Just E."/>
            <person name="Morio T."/>
            <person name="Rost R."/>
            <person name="Churcher C.M."/>
            <person name="Cooper J."/>
            <person name="Haydock S."/>
            <person name="van Driessche N."/>
            <person name="Cronin A."/>
            <person name="Goodhead I."/>
            <person name="Muzny D.M."/>
            <person name="Mourier T."/>
            <person name="Pain A."/>
            <person name="Lu M."/>
            <person name="Harper D."/>
            <person name="Lindsay R."/>
            <person name="Hauser H."/>
            <person name="James K.D."/>
            <person name="Quiles M."/>
            <person name="Madan Babu M."/>
            <person name="Saito T."/>
            <person name="Buchrieser C."/>
            <person name="Wardroper A."/>
            <person name="Felder M."/>
            <person name="Thangavelu M."/>
            <person name="Johnson D."/>
            <person name="Knights A."/>
            <person name="Loulseged H."/>
            <person name="Mungall K.L."/>
            <person name="Oliver K."/>
            <person name="Price C."/>
            <person name="Quail M.A."/>
            <person name="Urushihara H."/>
            <person name="Hernandez J."/>
            <person name="Rabbinowitsch E."/>
            <person name="Steffen D."/>
            <person name="Sanders M."/>
            <person name="Ma J."/>
            <person name="Kohara Y."/>
            <person name="Sharp S."/>
            <person name="Simmonds M.N."/>
            <person name="Spiegler S."/>
            <person name="Tivey A."/>
            <person name="Sugano S."/>
            <person name="White B."/>
            <person name="Walker D."/>
            <person name="Woodward J.R."/>
            <person name="Winckler T."/>
            <person name="Tanaka Y."/>
            <person name="Shaulsky G."/>
            <person name="Schleicher M."/>
            <person name="Weinstock G.M."/>
            <person name="Rosenthal A."/>
            <person name="Cox E.C."/>
            <person name="Chisholm R.L."/>
            <person name="Gibbs R.A."/>
            <person name="Loomis W.F."/>
            <person name="Platzer M."/>
            <person name="Kay R.R."/>
            <person name="Williams J.G."/>
            <person name="Dear P.H."/>
            <person name="Noegel A.A."/>
            <person name="Barrell B.G."/>
            <person name="Kuspa A."/>
        </authorList>
    </citation>
    <scope>NUCLEOTIDE SEQUENCE [LARGE SCALE GENOMIC DNA]</scope>
    <source>
        <strain>AX4</strain>
    </source>
</reference>
<reference key="3">
    <citation type="journal article" date="2002" name="J. Cell. Biochem.">
        <title>BEACH family of proteins: phylogenetic and functional analysis of six Dictyostelium BEACH proteins.</title>
        <authorList>
            <person name="Wang N."/>
            <person name="Wu W.I."/>
            <person name="De Lozanne A."/>
        </authorList>
    </citation>
    <scope>NUCLEOTIDE SEQUENCE [GENOMIC DNA] OF 363-2967</scope>
    <source>
        <strain>NC4A2</strain>
    </source>
</reference>
<comment type="sequence caution" evidence="4">
    <conflict type="erroneous gene model prediction">
        <sequence resource="EMBL-CDS" id="AAN38987"/>
    </conflict>
</comment>
<comment type="sequence caution" evidence="4">
    <conflict type="erroneous gene model prediction">
        <sequence resource="EMBL-CDS" id="EAL71615"/>
    </conflict>
</comment>
<comment type="sequence caution" evidence="4">
    <conflict type="erroneous gene model prediction">
        <sequence resource="EMBL-CDS" id="EAL71686"/>
    </conflict>
</comment>